<organism>
    <name type="scientific">Agelenopsis aperta</name>
    <name type="common">North American funnel-web spider</name>
    <name type="synonym">Agelenopsis gertschi</name>
    <dbReference type="NCBI Taxonomy" id="6908"/>
    <lineage>
        <taxon>Eukaryota</taxon>
        <taxon>Metazoa</taxon>
        <taxon>Ecdysozoa</taxon>
        <taxon>Arthropoda</taxon>
        <taxon>Chelicerata</taxon>
        <taxon>Arachnida</taxon>
        <taxon>Araneae</taxon>
        <taxon>Araneomorphae</taxon>
        <taxon>Entelegynae</taxon>
        <taxon>Agelenidae</taxon>
        <taxon>Agelenopsis</taxon>
    </lineage>
</organism>
<accession>P33034</accession>
<protein>
    <recommendedName>
        <fullName>Omega-agatoxin-Aa3a</fullName>
        <shortName>Omega-AGTX-Aa3a</shortName>
    </recommendedName>
    <alternativeName>
        <fullName>Omega-agatoxin IIIA</fullName>
        <shortName>Omega-Aga-IIIA</shortName>
    </alternativeName>
    <alternativeName>
        <fullName>Omega-agatoxin-3A</fullName>
    </alternativeName>
</protein>
<keyword id="KW-0108">Calcium channel impairing toxin</keyword>
<keyword id="KW-0903">Direct protein sequencing</keyword>
<keyword id="KW-1015">Disulfide bond</keyword>
<keyword id="KW-0872">Ion channel impairing toxin</keyword>
<keyword id="KW-0960">Knottin</keyword>
<keyword id="KW-0528">Neurotoxin</keyword>
<keyword id="KW-0638">Presynaptic neurotoxin</keyword>
<keyword id="KW-0964">Secreted</keyword>
<keyword id="KW-0800">Toxin</keyword>
<keyword id="KW-1218">Voltage-gated calcium channel impairing toxin</keyword>
<dbReference type="PIR" id="A42335">
    <property type="entry name" value="A42335"/>
</dbReference>
<dbReference type="PIR" id="A54252">
    <property type="entry name" value="A54252"/>
</dbReference>
<dbReference type="SMR" id="P33034"/>
<dbReference type="ArachnoServer" id="AS000178">
    <property type="toxin name" value="omega-agatoxin-Aa3a"/>
</dbReference>
<dbReference type="GO" id="GO:0005576">
    <property type="term" value="C:extracellular region"/>
    <property type="evidence" value="ECO:0007669"/>
    <property type="project" value="UniProtKB-SubCell"/>
</dbReference>
<dbReference type="GO" id="GO:0044231">
    <property type="term" value="C:host cell presynaptic membrane"/>
    <property type="evidence" value="ECO:0007669"/>
    <property type="project" value="UniProtKB-KW"/>
</dbReference>
<dbReference type="GO" id="GO:0005246">
    <property type="term" value="F:calcium channel regulator activity"/>
    <property type="evidence" value="ECO:0007669"/>
    <property type="project" value="UniProtKB-KW"/>
</dbReference>
<dbReference type="GO" id="GO:0090729">
    <property type="term" value="F:toxin activity"/>
    <property type="evidence" value="ECO:0007669"/>
    <property type="project" value="UniProtKB-KW"/>
</dbReference>
<dbReference type="InterPro" id="IPR005853">
    <property type="entry name" value="Omega-agatoxin_II/III_CS"/>
</dbReference>
<dbReference type="InterPro" id="IPR013605">
    <property type="entry name" value="Toxin_34"/>
</dbReference>
<dbReference type="Pfam" id="PF08396">
    <property type="entry name" value="Toxin_34"/>
    <property type="match status" value="1"/>
</dbReference>
<dbReference type="PROSITE" id="PS60023">
    <property type="entry name" value="OMEGA_AGA_II_III"/>
    <property type="match status" value="1"/>
</dbReference>
<reference key="1">
    <citation type="journal article" date="1992" name="J. Biol. Chem.">
        <title>Antagonism of synaptosomal calcium channels by subtypes of omega-agatoxins.</title>
        <authorList>
            <person name="Venema V.J."/>
            <person name="Swiderek K.M."/>
            <person name="Lee T.D."/>
            <person name="Hathaway G.M."/>
            <person name="Adams M.E."/>
        </authorList>
    </citation>
    <scope>PROTEIN SEQUENCE</scope>
    <source>
        <tissue>Venom</tissue>
    </source>
</reference>
<sequence>SCIDIGGDCDGEKDDCQCCRRNGYCSCYSLFGYLKSGCKCVVGTSAEFQGICRRKARQCYNSDPDKCESHNKPKRR</sequence>
<evidence type="ECO:0000305" key="1"/>
<feature type="chain" id="PRO_0000087606" description="Omega-agatoxin-Aa3a">
    <location>
        <begin position="1"/>
        <end position="76"/>
    </location>
</feature>
<feature type="disulfide bond" evidence="1">
    <location>
        <begin position="2"/>
        <end position="19"/>
    </location>
</feature>
<feature type="disulfide bond" evidence="1">
    <location>
        <begin position="9"/>
        <end position="25"/>
    </location>
</feature>
<feature type="disulfide bond" evidence="1">
    <location>
        <begin position="16"/>
        <end position="52"/>
    </location>
</feature>
<feature type="disulfide bond" evidence="1">
    <location>
        <begin position="18"/>
        <end position="40"/>
    </location>
</feature>
<feature type="disulfide bond" evidence="1">
    <location>
        <begin position="27"/>
        <end position="38"/>
    </location>
</feature>
<feature type="disulfide bond" evidence="1">
    <location>
        <begin position="59"/>
        <end position="67"/>
    </location>
</feature>
<feature type="sequence variant">
    <original>Q</original>
    <variation>T</variation>
    <location>
        <position position="58"/>
    </location>
</feature>
<comment type="function">
    <text>Omega-agatoxin are antagonist of voltage-gated calcium channels. They block insect neuromuscular transmission presynaptically. Potent blocker of N- (Cav2.2/CACNA1B) and L-type (Cav1/CACNA1) calcium channels.</text>
</comment>
<comment type="subcellular location">
    <subcellularLocation>
        <location>Secreted</location>
    </subcellularLocation>
</comment>
<comment type="tissue specificity">
    <text>Expressed by the venom gland.</text>
</comment>
<comment type="domain">
    <text evidence="1">The presence of a 'disulfide through disulfide knot' structurally defines this protein as a knottin.</text>
</comment>
<comment type="similarity">
    <text evidence="1">Belongs to the neurotoxin 04 (omega-agtx) family. 03 (type II/III omega-agtx) subfamily.</text>
</comment>
<name>TOG3A_AGEAP</name>
<proteinExistence type="evidence at protein level"/>